<protein>
    <recommendedName>
        <fullName evidence="1">ADP-dependent (S)-NAD(P)H-hydrate dehydratase</fullName>
        <ecNumber evidence="1">4.2.1.136</ecNumber>
    </recommendedName>
    <alternativeName>
        <fullName evidence="1">ADP-dependent NAD(P)HX dehydratase</fullName>
    </alternativeName>
</protein>
<evidence type="ECO:0000255" key="1">
    <source>
        <dbReference type="HAMAP-Rule" id="MF_01965"/>
    </source>
</evidence>
<proteinExistence type="inferred from homology"/>
<gene>
    <name evidence="1" type="primary">nnrD</name>
    <name type="ordered locus">XCC1076</name>
</gene>
<keyword id="KW-0067">ATP-binding</keyword>
<keyword id="KW-0456">Lyase</keyword>
<keyword id="KW-0520">NAD</keyword>
<keyword id="KW-0521">NADP</keyword>
<keyword id="KW-0547">Nucleotide-binding</keyword>
<keyword id="KW-1185">Reference proteome</keyword>
<name>NNRD_XANCP</name>
<accession>Q8PBP3</accession>
<organism>
    <name type="scientific">Xanthomonas campestris pv. campestris (strain ATCC 33913 / DSM 3586 / NCPPB 528 / LMG 568 / P 25)</name>
    <dbReference type="NCBI Taxonomy" id="190485"/>
    <lineage>
        <taxon>Bacteria</taxon>
        <taxon>Pseudomonadati</taxon>
        <taxon>Pseudomonadota</taxon>
        <taxon>Gammaproteobacteria</taxon>
        <taxon>Lysobacterales</taxon>
        <taxon>Lysobacteraceae</taxon>
        <taxon>Xanthomonas</taxon>
    </lineage>
</organism>
<feature type="chain" id="PRO_0000416151" description="ADP-dependent (S)-NAD(P)H-hydrate dehydratase">
    <location>
        <begin position="1"/>
        <end position="289"/>
    </location>
</feature>
<feature type="domain" description="YjeF C-terminal" evidence="1">
    <location>
        <begin position="9"/>
        <end position="286"/>
    </location>
</feature>
<feature type="binding site" evidence="1">
    <location>
        <position position="44"/>
    </location>
    <ligand>
        <name>(6S)-NADPHX</name>
        <dbReference type="ChEBI" id="CHEBI:64076"/>
    </ligand>
</feature>
<feature type="binding site" evidence="1">
    <location>
        <position position="160"/>
    </location>
    <ligand>
        <name>(6S)-NADPHX</name>
        <dbReference type="ChEBI" id="CHEBI:64076"/>
    </ligand>
</feature>
<feature type="binding site" evidence="1">
    <location>
        <begin position="197"/>
        <end position="201"/>
    </location>
    <ligand>
        <name>AMP</name>
        <dbReference type="ChEBI" id="CHEBI:456215"/>
    </ligand>
</feature>
<feature type="binding site" evidence="1">
    <location>
        <position position="226"/>
    </location>
    <ligand>
        <name>AMP</name>
        <dbReference type="ChEBI" id="CHEBI:456215"/>
    </ligand>
</feature>
<feature type="binding site" evidence="1">
    <location>
        <position position="227"/>
    </location>
    <ligand>
        <name>(6S)-NADPHX</name>
        <dbReference type="ChEBI" id="CHEBI:64076"/>
    </ligand>
</feature>
<reference key="1">
    <citation type="journal article" date="2002" name="Nature">
        <title>Comparison of the genomes of two Xanthomonas pathogens with differing host specificities.</title>
        <authorList>
            <person name="da Silva A.C.R."/>
            <person name="Ferro J.A."/>
            <person name="Reinach F.C."/>
            <person name="Farah C.S."/>
            <person name="Furlan L.R."/>
            <person name="Quaggio R.B."/>
            <person name="Monteiro-Vitorello C.B."/>
            <person name="Van Sluys M.A."/>
            <person name="Almeida N.F. Jr."/>
            <person name="Alves L.M.C."/>
            <person name="do Amaral A.M."/>
            <person name="Bertolini M.C."/>
            <person name="Camargo L.E.A."/>
            <person name="Camarotte G."/>
            <person name="Cannavan F."/>
            <person name="Cardozo J."/>
            <person name="Chambergo F."/>
            <person name="Ciapina L.P."/>
            <person name="Cicarelli R.M.B."/>
            <person name="Coutinho L.L."/>
            <person name="Cursino-Santos J.R."/>
            <person name="El-Dorry H."/>
            <person name="Faria J.B."/>
            <person name="Ferreira A.J.S."/>
            <person name="Ferreira R.C.C."/>
            <person name="Ferro M.I.T."/>
            <person name="Formighieri E.F."/>
            <person name="Franco M.C."/>
            <person name="Greggio C.C."/>
            <person name="Gruber A."/>
            <person name="Katsuyama A.M."/>
            <person name="Kishi L.T."/>
            <person name="Leite R.P."/>
            <person name="Lemos E.G.M."/>
            <person name="Lemos M.V.F."/>
            <person name="Locali E.C."/>
            <person name="Machado M.A."/>
            <person name="Madeira A.M.B.N."/>
            <person name="Martinez-Rossi N.M."/>
            <person name="Martins E.C."/>
            <person name="Meidanis J."/>
            <person name="Menck C.F.M."/>
            <person name="Miyaki C.Y."/>
            <person name="Moon D.H."/>
            <person name="Moreira L.M."/>
            <person name="Novo M.T.M."/>
            <person name="Okura V.K."/>
            <person name="Oliveira M.C."/>
            <person name="Oliveira V.R."/>
            <person name="Pereira H.A."/>
            <person name="Rossi A."/>
            <person name="Sena J.A.D."/>
            <person name="Silva C."/>
            <person name="de Souza R.F."/>
            <person name="Spinola L.A.F."/>
            <person name="Takita M.A."/>
            <person name="Tamura R.E."/>
            <person name="Teixeira E.C."/>
            <person name="Tezza R.I.D."/>
            <person name="Trindade dos Santos M."/>
            <person name="Truffi D."/>
            <person name="Tsai S.M."/>
            <person name="White F.F."/>
            <person name="Setubal J.C."/>
            <person name="Kitajima J.P."/>
        </authorList>
    </citation>
    <scope>NUCLEOTIDE SEQUENCE [LARGE SCALE GENOMIC DNA]</scope>
    <source>
        <strain>ATCC 33913 / DSM 3586 / NCPPB 528 / LMG 568 / P 25</strain>
    </source>
</reference>
<sequence length="289" mass="28802">MTGPRVRTVTAAALRAQPLPAPGGDKEQRGRVLIVGGSARVPGAVMLAGEAALRAGAGKLQLATAASVAPGMALAMPEALVLGLGENGQGEIVRGHRALDAAMSACDAAVIGPGMASTNTTAALVKRAIDQAVCTLVLDAGALSPRLRAPLGRPFVLTPHAGEMAALAGDDKAAVEAAPADYALAFAKKMRSVVIVKGADSFVAGPDGALWVHRGGVPGLGTSGSGDTLAGLIAGFAARGCDALTAALWGVFVHATAGKQLAKRIGTVGFLAREIPPEVPGILDRLPRG</sequence>
<dbReference type="EC" id="4.2.1.136" evidence="1"/>
<dbReference type="EMBL" id="AE008922">
    <property type="protein sequence ID" value="AAM40375.1"/>
    <property type="molecule type" value="Genomic_DNA"/>
</dbReference>
<dbReference type="RefSeq" id="NP_636451.1">
    <property type="nucleotide sequence ID" value="NC_003902.1"/>
</dbReference>
<dbReference type="RefSeq" id="WP_011036276.1">
    <property type="nucleotide sequence ID" value="NC_003902.1"/>
</dbReference>
<dbReference type="SMR" id="Q8PBP3"/>
<dbReference type="STRING" id="190485.XCC1076"/>
<dbReference type="EnsemblBacteria" id="AAM40375">
    <property type="protein sequence ID" value="AAM40375"/>
    <property type="gene ID" value="XCC1076"/>
</dbReference>
<dbReference type="KEGG" id="xcc:XCC1076"/>
<dbReference type="PATRIC" id="fig|190485.4.peg.1144"/>
<dbReference type="eggNOG" id="COG0063">
    <property type="taxonomic scope" value="Bacteria"/>
</dbReference>
<dbReference type="HOGENOM" id="CLU_024853_2_2_6"/>
<dbReference type="OrthoDB" id="9806925at2"/>
<dbReference type="Proteomes" id="UP000001010">
    <property type="component" value="Chromosome"/>
</dbReference>
<dbReference type="GO" id="GO:0052855">
    <property type="term" value="F:ADP-dependent NAD(P)H-hydrate dehydratase activity"/>
    <property type="evidence" value="ECO:0000318"/>
    <property type="project" value="GO_Central"/>
</dbReference>
<dbReference type="GO" id="GO:0005524">
    <property type="term" value="F:ATP binding"/>
    <property type="evidence" value="ECO:0007669"/>
    <property type="project" value="UniProtKB-KW"/>
</dbReference>
<dbReference type="GO" id="GO:0052856">
    <property type="term" value="F:NAD(P)HX epimerase activity"/>
    <property type="evidence" value="ECO:0000318"/>
    <property type="project" value="GO_Central"/>
</dbReference>
<dbReference type="GO" id="GO:0110051">
    <property type="term" value="P:metabolite repair"/>
    <property type="evidence" value="ECO:0000318"/>
    <property type="project" value="GO_Central"/>
</dbReference>
<dbReference type="GO" id="GO:0046496">
    <property type="term" value="P:nicotinamide nucleotide metabolic process"/>
    <property type="evidence" value="ECO:0007669"/>
    <property type="project" value="UniProtKB-UniRule"/>
</dbReference>
<dbReference type="CDD" id="cd01171">
    <property type="entry name" value="YXKO-related"/>
    <property type="match status" value="1"/>
</dbReference>
<dbReference type="Gene3D" id="3.40.1190.20">
    <property type="match status" value="1"/>
</dbReference>
<dbReference type="HAMAP" id="MF_01965">
    <property type="entry name" value="NADHX_dehydratase"/>
    <property type="match status" value="1"/>
</dbReference>
<dbReference type="InterPro" id="IPR000631">
    <property type="entry name" value="CARKD"/>
</dbReference>
<dbReference type="InterPro" id="IPR029056">
    <property type="entry name" value="Ribokinase-like"/>
</dbReference>
<dbReference type="NCBIfam" id="TIGR00196">
    <property type="entry name" value="yjeF_cterm"/>
    <property type="match status" value="1"/>
</dbReference>
<dbReference type="PANTHER" id="PTHR12592:SF0">
    <property type="entry name" value="ATP-DEPENDENT (S)-NAD(P)H-HYDRATE DEHYDRATASE"/>
    <property type="match status" value="1"/>
</dbReference>
<dbReference type="PANTHER" id="PTHR12592">
    <property type="entry name" value="ATP-DEPENDENT (S)-NAD(P)H-HYDRATE DEHYDRATASE FAMILY MEMBER"/>
    <property type="match status" value="1"/>
</dbReference>
<dbReference type="Pfam" id="PF01256">
    <property type="entry name" value="Carb_kinase"/>
    <property type="match status" value="1"/>
</dbReference>
<dbReference type="SUPFAM" id="SSF53613">
    <property type="entry name" value="Ribokinase-like"/>
    <property type="match status" value="1"/>
</dbReference>
<dbReference type="PROSITE" id="PS51383">
    <property type="entry name" value="YJEF_C_3"/>
    <property type="match status" value="1"/>
</dbReference>
<comment type="function">
    <text evidence="1">Catalyzes the dehydration of the S-form of NAD(P)HX at the expense of ADP, which is converted to AMP. Together with NAD(P)HX epimerase, which catalyzes the epimerization of the S- and R-forms, the enzyme allows the repair of both epimers of NAD(P)HX, a damaged form of NAD(P)H that is a result of enzymatic or heat-dependent hydration.</text>
</comment>
<comment type="catalytic activity">
    <reaction evidence="1">
        <text>(6S)-NADHX + ADP = AMP + phosphate + NADH + H(+)</text>
        <dbReference type="Rhea" id="RHEA:32223"/>
        <dbReference type="ChEBI" id="CHEBI:15378"/>
        <dbReference type="ChEBI" id="CHEBI:43474"/>
        <dbReference type="ChEBI" id="CHEBI:57945"/>
        <dbReference type="ChEBI" id="CHEBI:64074"/>
        <dbReference type="ChEBI" id="CHEBI:456215"/>
        <dbReference type="ChEBI" id="CHEBI:456216"/>
        <dbReference type="EC" id="4.2.1.136"/>
    </reaction>
</comment>
<comment type="catalytic activity">
    <reaction evidence="1">
        <text>(6S)-NADPHX + ADP = AMP + phosphate + NADPH + H(+)</text>
        <dbReference type="Rhea" id="RHEA:32235"/>
        <dbReference type="ChEBI" id="CHEBI:15378"/>
        <dbReference type="ChEBI" id="CHEBI:43474"/>
        <dbReference type="ChEBI" id="CHEBI:57783"/>
        <dbReference type="ChEBI" id="CHEBI:64076"/>
        <dbReference type="ChEBI" id="CHEBI:456215"/>
        <dbReference type="ChEBI" id="CHEBI:456216"/>
        <dbReference type="EC" id="4.2.1.136"/>
    </reaction>
</comment>
<comment type="cofactor">
    <cofactor evidence="1">
        <name>Mg(2+)</name>
        <dbReference type="ChEBI" id="CHEBI:18420"/>
    </cofactor>
</comment>
<comment type="subunit">
    <text evidence="1">Homotetramer.</text>
</comment>
<comment type="similarity">
    <text evidence="1">Belongs to the NnrD/CARKD family.</text>
</comment>